<reference key="1">
    <citation type="journal article" date="2009" name="Genome Res.">
        <title>Comparative genomic analyses of the human fungal pathogens Coccidioides and their relatives.</title>
        <authorList>
            <person name="Sharpton T.J."/>
            <person name="Stajich J.E."/>
            <person name="Rounsley S.D."/>
            <person name="Gardner M.J."/>
            <person name="Wortman J.R."/>
            <person name="Jordar V.S."/>
            <person name="Maiti R."/>
            <person name="Kodira C.D."/>
            <person name="Neafsey D.E."/>
            <person name="Zeng Q."/>
            <person name="Hung C.-Y."/>
            <person name="McMahan C."/>
            <person name="Muszewska A."/>
            <person name="Grynberg M."/>
            <person name="Mandel M.A."/>
            <person name="Kellner E.M."/>
            <person name="Barker B.M."/>
            <person name="Galgiani J.N."/>
            <person name="Orbach M.J."/>
            <person name="Kirkland T.N."/>
            <person name="Cole G.T."/>
            <person name="Henn M.R."/>
            <person name="Birren B.W."/>
            <person name="Taylor J.W."/>
        </authorList>
    </citation>
    <scope>NUCLEOTIDE SEQUENCE [LARGE SCALE GENOMIC DNA]</scope>
    <source>
        <strain>RS</strain>
    </source>
</reference>
<reference key="2">
    <citation type="journal article" date="2010" name="Genome Res.">
        <title>Population genomic sequencing of Coccidioides fungi reveals recent hybridization and transposon control.</title>
        <authorList>
            <person name="Neafsey D.E."/>
            <person name="Barker B.M."/>
            <person name="Sharpton T.J."/>
            <person name="Stajich J.E."/>
            <person name="Park D.J."/>
            <person name="Whiston E."/>
            <person name="Hung C.-Y."/>
            <person name="McMahan C."/>
            <person name="White J."/>
            <person name="Sykes S."/>
            <person name="Heiman D."/>
            <person name="Young S."/>
            <person name="Zeng Q."/>
            <person name="Abouelleil A."/>
            <person name="Aftuck L."/>
            <person name="Bessette D."/>
            <person name="Brown A."/>
            <person name="FitzGerald M."/>
            <person name="Lui A."/>
            <person name="Macdonald J.P."/>
            <person name="Priest M."/>
            <person name="Orbach M.J."/>
            <person name="Galgiani J.N."/>
            <person name="Kirkland T.N."/>
            <person name="Cole G.T."/>
            <person name="Birren B.W."/>
            <person name="Henn M.R."/>
            <person name="Taylor J.W."/>
            <person name="Rounsley S.D."/>
        </authorList>
    </citation>
    <scope>GENOME REANNOTATION</scope>
    <source>
        <strain>RS</strain>
    </source>
</reference>
<protein>
    <recommendedName>
        <fullName>H/ACA ribonucleoprotein complex subunit GAR1</fullName>
    </recommendedName>
    <alternativeName>
        <fullName>snoRNP protein GAR1</fullName>
    </alternativeName>
</protein>
<feature type="chain" id="PRO_0000327526" description="H/ACA ribonucleoprotein complex subunit GAR1">
    <location>
        <begin position="1"/>
        <end position="203"/>
    </location>
</feature>
<feature type="region of interest" description="Disordered" evidence="2">
    <location>
        <begin position="1"/>
        <end position="32"/>
    </location>
</feature>
<feature type="region of interest" description="RGG-box 1">
    <location>
        <begin position="4"/>
        <end position="29"/>
    </location>
</feature>
<feature type="region of interest" description="Disordered" evidence="2">
    <location>
        <begin position="124"/>
        <end position="203"/>
    </location>
</feature>
<feature type="region of interest" description="RGG-box 2">
    <location>
        <begin position="146"/>
        <end position="198"/>
    </location>
</feature>
<feature type="compositionally biased region" description="Gly residues" evidence="2">
    <location>
        <begin position="1"/>
        <end position="29"/>
    </location>
</feature>
<feature type="compositionally biased region" description="Gly residues" evidence="2">
    <location>
        <begin position="144"/>
        <end position="203"/>
    </location>
</feature>
<proteinExistence type="inferred from homology"/>
<name>GAR1_COCIM</name>
<accession>Q1E6M1</accession>
<accession>A0A0D6K9Q3</accession>
<accession>J3KKB4</accession>
<keyword id="KW-0539">Nucleus</keyword>
<keyword id="KW-1185">Reference proteome</keyword>
<keyword id="KW-0677">Repeat</keyword>
<keyword id="KW-0687">Ribonucleoprotein</keyword>
<keyword id="KW-0690">Ribosome biogenesis</keyword>
<keyword id="KW-0694">RNA-binding</keyword>
<keyword id="KW-0698">rRNA processing</keyword>
<organism>
    <name type="scientific">Coccidioides immitis (strain RS)</name>
    <name type="common">Valley fever fungus</name>
    <dbReference type="NCBI Taxonomy" id="246410"/>
    <lineage>
        <taxon>Eukaryota</taxon>
        <taxon>Fungi</taxon>
        <taxon>Dikarya</taxon>
        <taxon>Ascomycota</taxon>
        <taxon>Pezizomycotina</taxon>
        <taxon>Eurotiomycetes</taxon>
        <taxon>Eurotiomycetidae</taxon>
        <taxon>Onygenales</taxon>
        <taxon>Onygenaceae</taxon>
        <taxon>Coccidioides</taxon>
    </lineage>
</organism>
<sequence>MASRGGSRGRGFGTGANRGGFSARGGRGGMQQSFGPPTTVLEMGSFMHACEGEMVCESINPKIPYFNAPIYLENKTPVGKVDEVLGPINQVYFTIKPQEGIVATSFKPGDKFYIGGDKLLPLEKFLPKPKPPPGVSKPKKAAGTGRGGVRGGRGGARGGRGAPRGRGGFGGRGGGGARGGRGGGFSSRGGPRGGSRGGFRGRG</sequence>
<evidence type="ECO:0000250" key="1">
    <source>
        <dbReference type="UniProtKB" id="P28007"/>
    </source>
</evidence>
<evidence type="ECO:0000256" key="2">
    <source>
        <dbReference type="SAM" id="MobiDB-lite"/>
    </source>
</evidence>
<evidence type="ECO:0000305" key="3"/>
<gene>
    <name type="primary">GAR1</name>
    <name type="ORF">CIMG_01792</name>
</gene>
<dbReference type="EMBL" id="GG704911">
    <property type="protein sequence ID" value="EAS36438.1"/>
    <property type="molecule type" value="Genomic_DNA"/>
</dbReference>
<dbReference type="RefSeq" id="XP_001248021.1">
    <property type="nucleotide sequence ID" value="XM_001248020.2"/>
</dbReference>
<dbReference type="SMR" id="Q1E6M1"/>
<dbReference type="FunCoup" id="Q1E6M1">
    <property type="interactions" value="528"/>
</dbReference>
<dbReference type="STRING" id="246410.Q1E6M1"/>
<dbReference type="GeneID" id="4566723"/>
<dbReference type="KEGG" id="cim:CIMG_01792"/>
<dbReference type="VEuPathDB" id="FungiDB:CIMG_01792"/>
<dbReference type="InParanoid" id="Q1E6M1"/>
<dbReference type="OMA" id="KPQDGIV"/>
<dbReference type="OrthoDB" id="2187159at2759"/>
<dbReference type="Proteomes" id="UP000001261">
    <property type="component" value="Unassembled WGS sequence"/>
</dbReference>
<dbReference type="GO" id="GO:0031429">
    <property type="term" value="C:box H/ACA snoRNP complex"/>
    <property type="evidence" value="ECO:0007669"/>
    <property type="project" value="TreeGrafter"/>
</dbReference>
<dbReference type="GO" id="GO:0034513">
    <property type="term" value="F:box H/ACA snoRNA binding"/>
    <property type="evidence" value="ECO:0007669"/>
    <property type="project" value="TreeGrafter"/>
</dbReference>
<dbReference type="GO" id="GO:0000454">
    <property type="term" value="P:snoRNA guided rRNA pseudouridine synthesis"/>
    <property type="evidence" value="ECO:0007669"/>
    <property type="project" value="TreeGrafter"/>
</dbReference>
<dbReference type="FunFam" id="2.40.10.230:FF:000001">
    <property type="entry name" value="H/ACA ribonucleoprotein complex subunit"/>
    <property type="match status" value="1"/>
</dbReference>
<dbReference type="Gene3D" id="2.40.10.230">
    <property type="entry name" value="Probable tRNA pseudouridine synthase domain"/>
    <property type="match status" value="1"/>
</dbReference>
<dbReference type="InterPro" id="IPR038664">
    <property type="entry name" value="Gar1/Naf1_Cbf5-bd_sf"/>
</dbReference>
<dbReference type="InterPro" id="IPR007504">
    <property type="entry name" value="H/ACA_rnp_Gar1/Naf1"/>
</dbReference>
<dbReference type="InterPro" id="IPR009000">
    <property type="entry name" value="Transl_B-barrel_sf"/>
</dbReference>
<dbReference type="PANTHER" id="PTHR23237:SF6">
    <property type="entry name" value="H_ACA RIBONUCLEOPROTEIN COMPLEX SUBUNIT 1"/>
    <property type="match status" value="1"/>
</dbReference>
<dbReference type="PANTHER" id="PTHR23237">
    <property type="entry name" value="NUCLEOLAR PROTEIN FAMILY A MEMBER 1 SNORNP PROTEIN GAR1"/>
    <property type="match status" value="1"/>
</dbReference>
<dbReference type="Pfam" id="PF04410">
    <property type="entry name" value="Gar1"/>
    <property type="match status" value="1"/>
</dbReference>
<dbReference type="SUPFAM" id="SSF50447">
    <property type="entry name" value="Translation proteins"/>
    <property type="match status" value="1"/>
</dbReference>
<comment type="function">
    <text evidence="1">Non-catalytic component of the H/ACA small nucleolar ribonucleoprotein (H/ACA snoRNP), which catalyzes pseudouridylation of rRNA and is required for ribosome biogenesis. This involves the isomerization of uridine such that the ribose is subsequently attached to C5, instead of the normal N1. Pseudouridine ('psi') residues may serve to stabilize the conformation of rRNAs. The H/ACA snoRNP complex also mediates pseudouridylation of other types of RNAs. The H/ACA snoRNP complex mediates pseudouridylation at position 93 in U2 snRNA.</text>
</comment>
<comment type="subunit">
    <text evidence="1">Component of the small nucleolar ribonucleoprotein particles containing H/ACA-type snoRNAs (H/ACA snoRNPs).</text>
</comment>
<comment type="subcellular location">
    <subcellularLocation>
        <location evidence="1">Nucleus</location>
        <location evidence="1">Nucleolus</location>
    </subcellularLocation>
</comment>
<comment type="similarity">
    <text evidence="3">Belongs to the GAR1 family.</text>
</comment>